<sequence>MLQSIHLRFSSTPSPSKRESLIIPSVICSFPFTSSSFRPKQTQKLKRLVQFCAPYEVGGGYTDEELFERYGTQQNQTNVKDKLDPAEYEALLKGGEQVTSVLEEMITLLEDMKMNEASENVAVELAAQGVIGKRVDEMESGFMMALDYMIQLADKDQDEKRKSLLEVVKETVLSHLTKKCPPHVQVIGLLCRTPKKESRHELLRRVAAGGGAFESENGTKLHIPGANLNDIANQADDLLETMETRPAIPDRKLLARLVLIREEARNMMGGGILDERNDRGFTTLPESEVNFLAKLVALKPGKTVQQMIQNVMQGKDEGADNLSKEDDSSTEGRKPSGLNGRGSVTGRKPLPVRPGMFLETVTKVLGSIYSGNASGITAQHLEWVHQKTLQVLEEIAY</sequence>
<proteinExistence type="evidence at protein level"/>
<evidence type="ECO:0000255" key="1"/>
<evidence type="ECO:0000256" key="2">
    <source>
        <dbReference type="SAM" id="MobiDB-lite"/>
    </source>
</evidence>
<evidence type="ECO:0000269" key="3">
    <source>
    </source>
</evidence>
<evidence type="ECO:0000303" key="4">
    <source>
    </source>
</evidence>
<evidence type="ECO:0000305" key="5"/>
<evidence type="ECO:0000312" key="6">
    <source>
        <dbReference type="Araport" id="AT5G48470"/>
    </source>
</evidence>
<evidence type="ECO:0000312" key="7">
    <source>
        <dbReference type="EMBL" id="ABF58933.1"/>
    </source>
</evidence>
<evidence type="ECO:0000312" key="8">
    <source>
        <dbReference type="EMBL" id="BAA96967.1"/>
    </source>
</evidence>
<dbReference type="EMBL" id="AB020745">
    <property type="protein sequence ID" value="BAA96967.1"/>
    <property type="status" value="ALT_SEQ"/>
    <property type="molecule type" value="Genomic_DNA"/>
</dbReference>
<dbReference type="EMBL" id="CP002688">
    <property type="protein sequence ID" value="AED95674.1"/>
    <property type="molecule type" value="Genomic_DNA"/>
</dbReference>
<dbReference type="EMBL" id="BT025515">
    <property type="protein sequence ID" value="ABF58933.1"/>
    <property type="molecule type" value="mRNA"/>
</dbReference>
<dbReference type="EMBL" id="AY086465">
    <property type="protein sequence ID" value="AAM63468.1"/>
    <property type="molecule type" value="mRNA"/>
</dbReference>
<dbReference type="RefSeq" id="NP_568697.1">
    <property type="nucleotide sequence ID" value="NM_124222.3"/>
</dbReference>
<dbReference type="FunCoup" id="Q1H5E9">
    <property type="interactions" value="567"/>
</dbReference>
<dbReference type="IntAct" id="Q1H5E9">
    <property type="interactions" value="5"/>
</dbReference>
<dbReference type="STRING" id="3702.Q1H5E9"/>
<dbReference type="GlyGen" id="Q1H5E9">
    <property type="glycosylation" value="1 site"/>
</dbReference>
<dbReference type="PaxDb" id="3702-AT5G48470.1"/>
<dbReference type="ProteomicsDB" id="226496"/>
<dbReference type="EnsemblPlants" id="AT5G48470.1">
    <property type="protein sequence ID" value="AT5G48470.1"/>
    <property type="gene ID" value="AT5G48470"/>
</dbReference>
<dbReference type="GeneID" id="834902"/>
<dbReference type="Gramene" id="AT5G48470.1">
    <property type="protein sequence ID" value="AT5G48470.1"/>
    <property type="gene ID" value="AT5G48470"/>
</dbReference>
<dbReference type="KEGG" id="ath:AT5G48470"/>
<dbReference type="Araport" id="AT5G48470"/>
<dbReference type="TAIR" id="AT5G48470">
    <property type="gene designation" value="PRDA1"/>
</dbReference>
<dbReference type="eggNOG" id="ENOG502QRV4">
    <property type="taxonomic scope" value="Eukaryota"/>
</dbReference>
<dbReference type="HOGENOM" id="CLU_046485_0_0_1"/>
<dbReference type="InParanoid" id="Q1H5E9"/>
<dbReference type="OMA" id="LEDMKMN"/>
<dbReference type="OrthoDB" id="2015968at2759"/>
<dbReference type="PhylomeDB" id="Q1H5E9"/>
<dbReference type="PRO" id="PR:Q1H5E9"/>
<dbReference type="Proteomes" id="UP000006548">
    <property type="component" value="Chromosome 5"/>
</dbReference>
<dbReference type="ExpressionAtlas" id="Q1H5E9">
    <property type="expression patterns" value="baseline and differential"/>
</dbReference>
<dbReference type="GO" id="GO:0042644">
    <property type="term" value="C:chloroplast nucleoid"/>
    <property type="evidence" value="ECO:0000314"/>
    <property type="project" value="UniProtKB"/>
</dbReference>
<dbReference type="GO" id="GO:0009658">
    <property type="term" value="P:chloroplast organization"/>
    <property type="evidence" value="ECO:0000315"/>
    <property type="project" value="UniProtKB"/>
</dbReference>
<dbReference type="GO" id="GO:0006355">
    <property type="term" value="P:regulation of DNA-templated transcription"/>
    <property type="evidence" value="ECO:0000315"/>
    <property type="project" value="UniProtKB"/>
</dbReference>
<dbReference type="InterPro" id="IPR038961">
    <property type="entry name" value="PRDA1"/>
</dbReference>
<dbReference type="PANTHER" id="PTHR37262">
    <property type="entry name" value="PROTEIN PEP-RELATED DEVELOPMENT ARRESTED 1, CHLOROPLASTIC"/>
    <property type="match status" value="1"/>
</dbReference>
<dbReference type="PANTHER" id="PTHR37262:SF1">
    <property type="entry name" value="PROTEIN PEP-RELATED DEVELOPMENT ARRESTED 1, CHLOROPLASTIC"/>
    <property type="match status" value="1"/>
</dbReference>
<protein>
    <recommendedName>
        <fullName evidence="4">Protein PEP-RELATED DEVELOPMENT ARRESTED 1, chloroplastic</fullName>
        <shortName evidence="4">AtPRDA1</shortName>
    </recommendedName>
</protein>
<feature type="transit peptide" description="Chloroplast" evidence="1">
    <location>
        <begin position="1"/>
        <end position="52"/>
    </location>
</feature>
<feature type="chain" id="PRO_0000439384" description="Protein PEP-RELATED DEVELOPMENT ARRESTED 1, chloroplastic">
    <location>
        <begin position="53"/>
        <end position="397"/>
    </location>
</feature>
<feature type="region of interest" description="Disordered" evidence="2">
    <location>
        <begin position="315"/>
        <end position="351"/>
    </location>
</feature>
<feature type="compositionally biased region" description="Basic and acidic residues" evidence="2">
    <location>
        <begin position="315"/>
        <end position="334"/>
    </location>
</feature>
<feature type="sequence conflict" description="In Ref. 4; AAM63468." evidence="5" ref="4">
    <original>D</original>
    <variation>S</variation>
    <location>
        <position position="326"/>
    </location>
</feature>
<feature type="sequence conflict" description="In Ref. 4; AAM63468." evidence="5" ref="4">
    <original>N</original>
    <variation>K</variation>
    <location>
        <position position="339"/>
    </location>
</feature>
<name>PRDA1_ARATH</name>
<reference key="1">
    <citation type="journal article" date="2000" name="DNA Res.">
        <title>Structural analysis of Arabidopsis thaliana chromosome 5. X. Sequence features of the regions of 3,076,755 bp covered by sixty P1 and TAC clones.</title>
        <authorList>
            <person name="Sato S."/>
            <person name="Nakamura Y."/>
            <person name="Kaneko T."/>
            <person name="Katoh T."/>
            <person name="Asamizu E."/>
            <person name="Kotani H."/>
            <person name="Tabata S."/>
        </authorList>
    </citation>
    <scope>NUCLEOTIDE SEQUENCE [LARGE SCALE GENOMIC DNA]</scope>
    <source>
        <strain>cv. Columbia</strain>
    </source>
</reference>
<reference key="2">
    <citation type="journal article" date="2017" name="Plant J.">
        <title>Araport11: a complete reannotation of the Arabidopsis thaliana reference genome.</title>
        <authorList>
            <person name="Cheng C.Y."/>
            <person name="Krishnakumar V."/>
            <person name="Chan A.P."/>
            <person name="Thibaud-Nissen F."/>
            <person name="Schobel S."/>
            <person name="Town C.D."/>
        </authorList>
    </citation>
    <scope>GENOME REANNOTATION</scope>
    <source>
        <strain>cv. Columbia</strain>
    </source>
</reference>
<reference evidence="7" key="3">
    <citation type="submission" date="2006-05" db="EMBL/GenBank/DDBJ databases">
        <title>Arabidopsis ORF clones.</title>
        <authorList>
            <person name="Shinn P."/>
            <person name="Chen H."/>
            <person name="Kim C.J."/>
            <person name="Quinitio C."/>
            <person name="Ecker J.R."/>
        </authorList>
    </citation>
    <scope>NUCLEOTIDE SEQUENCE [LARGE SCALE MRNA]</scope>
    <source>
        <strain>cv. Columbia</strain>
    </source>
</reference>
<reference key="4">
    <citation type="submission" date="2002-03" db="EMBL/GenBank/DDBJ databases">
        <title>Full-length cDNA from Arabidopsis thaliana.</title>
        <authorList>
            <person name="Brover V.V."/>
            <person name="Troukhan M.E."/>
            <person name="Alexandrov N.A."/>
            <person name="Lu Y.-P."/>
            <person name="Flavell R.B."/>
            <person name="Feldmann K.A."/>
        </authorList>
    </citation>
    <scope>NUCLEOTIDE SEQUENCE [LARGE SCALE MRNA]</scope>
</reference>
<reference key="5">
    <citation type="journal article" date="2013" name="Plant Cell Physiol.">
        <title>PRDA1, a novel chloroplast nucleoid protein, is required for early chloroplast development and is involved in the regulation of plastid gene expression in Arabidopsis.</title>
        <authorList>
            <person name="Qiao J."/>
            <person name="Li J."/>
            <person name="Chu W."/>
            <person name="Luo M."/>
        </authorList>
    </citation>
    <scope>FUNCTION</scope>
    <scope>INTERACTION WITH FSD2 AND MRL7</scope>
    <scope>SUBCELLULAR LOCATION</scope>
    <scope>TISSUE SPECIFICITY</scope>
    <scope>INDUCTION BY LIGHT</scope>
    <scope>DISRUPTION PHENOTYPE</scope>
</reference>
<accession>Q1H5E9</accession>
<accession>Q8LCQ2</accession>
<accession>Q9LV67</accession>
<gene>
    <name type="primary">PRDA1</name>
    <name evidence="6" type="ordered locus">At5g48470</name>
    <name evidence="8" type="ORF">MJE7.11</name>
</gene>
<organism>
    <name type="scientific">Arabidopsis thaliana</name>
    <name type="common">Mouse-ear cress</name>
    <dbReference type="NCBI Taxonomy" id="3702"/>
    <lineage>
        <taxon>Eukaryota</taxon>
        <taxon>Viridiplantae</taxon>
        <taxon>Streptophyta</taxon>
        <taxon>Embryophyta</taxon>
        <taxon>Tracheophyta</taxon>
        <taxon>Spermatophyta</taxon>
        <taxon>Magnoliopsida</taxon>
        <taxon>eudicotyledons</taxon>
        <taxon>Gunneridae</taxon>
        <taxon>Pentapetalae</taxon>
        <taxon>rosids</taxon>
        <taxon>malvids</taxon>
        <taxon>Brassicales</taxon>
        <taxon>Brassicaceae</taxon>
        <taxon>Camelineae</taxon>
        <taxon>Arabidopsis</taxon>
    </lineage>
</organism>
<keyword id="KW-0150">Chloroplast</keyword>
<keyword id="KW-0934">Plastid</keyword>
<keyword id="KW-1185">Reference proteome</keyword>
<keyword id="KW-0809">Transit peptide</keyword>
<comment type="function">
    <text evidence="3">Plays an essential role in early steps of chloroplast development. May be involved in the redox control of plastid gene expression by maintening the redox state around chloroplast nucleoids. May positively regulate plastid-encoded RNA polymerase (PEP) activity, through binding to FSD2.</text>
</comment>
<comment type="subunit">
    <text evidence="3">Interacts with FSD2 and MRL7.</text>
</comment>
<comment type="interaction">
    <interactant intactId="EBI-1998055">
        <id>Q1H5E9</id>
    </interactant>
    <interactant intactId="EBI-763232">
        <id>O80931</id>
        <label>AS1</label>
    </interactant>
    <organismsDiffer>false</organismsDiffer>
    <experiments>3</experiments>
</comment>
<comment type="interaction">
    <interactant intactId="EBI-1998055">
        <id>Q1H5E9</id>
    </interactant>
    <interactant intactId="EBI-2012188">
        <id>Q8RXD6</id>
        <label>HUB1</label>
    </interactant>
    <organismsDiffer>false</organismsDiffer>
    <experiments>3</experiments>
</comment>
<comment type="interaction">
    <interactant intactId="EBI-1998055">
        <id>Q1H5E9</id>
    </interactant>
    <interactant intactId="EBI-4426557">
        <id>Q84MB2</id>
        <label>TIFY8</label>
    </interactant>
    <organismsDiffer>false</organismsDiffer>
    <experiments>3</experiments>
</comment>
<comment type="interaction">
    <interactant intactId="EBI-1998055">
        <id>Q1H5E9</id>
    </interactant>
    <interactant intactId="EBI-15193683">
        <id>Q5CCK4</id>
        <label>VAL2</label>
    </interactant>
    <organismsDiffer>false</organismsDiffer>
    <experiments>3</experiments>
</comment>
<comment type="subcellular location">
    <subcellularLocation>
        <location evidence="3">Plastid</location>
        <location evidence="3">Chloroplast stroma</location>
        <location evidence="3">Chloroplast nucleoid</location>
    </subcellularLocation>
</comment>
<comment type="tissue specificity">
    <text evidence="3">Highly expressed in young leaves, shoots and flowers. Expressed at low levels in stems and siliques.</text>
</comment>
<comment type="induction">
    <text evidence="3">Induced by light.</text>
</comment>
<comment type="disruption phenotype">
    <text evidence="3">Seedling lethality due to deficiency in chloroplast development.</text>
</comment>
<comment type="sequence caution" evidence="5">
    <conflict type="erroneous gene model prediction">
        <sequence resource="EMBL-CDS" id="BAA96967"/>
    </conflict>
</comment>